<evidence type="ECO:0000250" key="1"/>
<evidence type="ECO:0000250" key="2">
    <source>
        <dbReference type="UniProtKB" id="Q2WG80"/>
    </source>
</evidence>
<evidence type="ECO:0000255" key="3"/>
<evidence type="ECO:0000256" key="4">
    <source>
        <dbReference type="SAM" id="MobiDB-lite"/>
    </source>
</evidence>
<evidence type="ECO:0000269" key="5">
    <source>
    </source>
</evidence>
<evidence type="ECO:0000269" key="6">
    <source>
    </source>
</evidence>
<evidence type="ECO:0000269" key="7">
    <source>
    </source>
</evidence>
<evidence type="ECO:0000305" key="8"/>
<evidence type="ECO:0000312" key="9">
    <source>
        <dbReference type="EMBL" id="BAC38162.1"/>
    </source>
</evidence>
<evidence type="ECO:0000312" key="10">
    <source>
        <dbReference type="EMBL" id="BAE53720.1"/>
    </source>
</evidence>
<evidence type="ECO:0000312" key="11">
    <source>
        <dbReference type="MGI" id="MGI:2685968"/>
    </source>
</evidence>
<accession>Q2WG76</accession>
<accession>Q8BNN5</accession>
<proteinExistence type="evidence at transcript level"/>
<reference evidence="8 10" key="1">
    <citation type="journal article" date="2005" name="Dev. Cell">
        <title>Groucho-associated transcriptional repressor ripply1 is required for proper transition from the presomitic mesoderm to somites.</title>
        <authorList>
            <person name="Kawamura A."/>
            <person name="Koshida S."/>
            <person name="Hijikata H."/>
            <person name="Ohbayashi A."/>
            <person name="Kondoh H."/>
            <person name="Takada S."/>
        </authorList>
    </citation>
    <scope>NUCLEOTIDE SEQUENCE [MRNA]</scope>
    <scope>TISSUE SPECIFICITY</scope>
    <source>
        <tissue evidence="5">Embryo</tissue>
    </source>
</reference>
<reference evidence="8 9" key="2">
    <citation type="journal article" date="2005" name="Science">
        <title>The transcriptional landscape of the mammalian genome.</title>
        <authorList>
            <person name="Carninci P."/>
            <person name="Kasukawa T."/>
            <person name="Katayama S."/>
            <person name="Gough J."/>
            <person name="Frith M.C."/>
            <person name="Maeda N."/>
            <person name="Oyama R."/>
            <person name="Ravasi T."/>
            <person name="Lenhard B."/>
            <person name="Wells C."/>
            <person name="Kodzius R."/>
            <person name="Shimokawa K."/>
            <person name="Bajic V.B."/>
            <person name="Brenner S.E."/>
            <person name="Batalov S."/>
            <person name="Forrest A.R."/>
            <person name="Zavolan M."/>
            <person name="Davis M.J."/>
            <person name="Wilming L.G."/>
            <person name="Aidinis V."/>
            <person name="Allen J.E."/>
            <person name="Ambesi-Impiombato A."/>
            <person name="Apweiler R."/>
            <person name="Aturaliya R.N."/>
            <person name="Bailey T.L."/>
            <person name="Bansal M."/>
            <person name="Baxter L."/>
            <person name="Beisel K.W."/>
            <person name="Bersano T."/>
            <person name="Bono H."/>
            <person name="Chalk A.M."/>
            <person name="Chiu K.P."/>
            <person name="Choudhary V."/>
            <person name="Christoffels A."/>
            <person name="Clutterbuck D.R."/>
            <person name="Crowe M.L."/>
            <person name="Dalla E."/>
            <person name="Dalrymple B.P."/>
            <person name="de Bono B."/>
            <person name="Della Gatta G."/>
            <person name="di Bernardo D."/>
            <person name="Down T."/>
            <person name="Engstrom P."/>
            <person name="Fagiolini M."/>
            <person name="Faulkner G."/>
            <person name="Fletcher C.F."/>
            <person name="Fukushima T."/>
            <person name="Furuno M."/>
            <person name="Futaki S."/>
            <person name="Gariboldi M."/>
            <person name="Georgii-Hemming P."/>
            <person name="Gingeras T.R."/>
            <person name="Gojobori T."/>
            <person name="Green R.E."/>
            <person name="Gustincich S."/>
            <person name="Harbers M."/>
            <person name="Hayashi Y."/>
            <person name="Hensch T.K."/>
            <person name="Hirokawa N."/>
            <person name="Hill D."/>
            <person name="Huminiecki L."/>
            <person name="Iacono M."/>
            <person name="Ikeo K."/>
            <person name="Iwama A."/>
            <person name="Ishikawa T."/>
            <person name="Jakt M."/>
            <person name="Kanapin A."/>
            <person name="Katoh M."/>
            <person name="Kawasawa Y."/>
            <person name="Kelso J."/>
            <person name="Kitamura H."/>
            <person name="Kitano H."/>
            <person name="Kollias G."/>
            <person name="Krishnan S.P."/>
            <person name="Kruger A."/>
            <person name="Kummerfeld S.K."/>
            <person name="Kurochkin I.V."/>
            <person name="Lareau L.F."/>
            <person name="Lazarevic D."/>
            <person name="Lipovich L."/>
            <person name="Liu J."/>
            <person name="Liuni S."/>
            <person name="McWilliam S."/>
            <person name="Madan Babu M."/>
            <person name="Madera M."/>
            <person name="Marchionni L."/>
            <person name="Matsuda H."/>
            <person name="Matsuzawa S."/>
            <person name="Miki H."/>
            <person name="Mignone F."/>
            <person name="Miyake S."/>
            <person name="Morris K."/>
            <person name="Mottagui-Tabar S."/>
            <person name="Mulder N."/>
            <person name="Nakano N."/>
            <person name="Nakauchi H."/>
            <person name="Ng P."/>
            <person name="Nilsson R."/>
            <person name="Nishiguchi S."/>
            <person name="Nishikawa S."/>
            <person name="Nori F."/>
            <person name="Ohara O."/>
            <person name="Okazaki Y."/>
            <person name="Orlando V."/>
            <person name="Pang K.C."/>
            <person name="Pavan W.J."/>
            <person name="Pavesi G."/>
            <person name="Pesole G."/>
            <person name="Petrovsky N."/>
            <person name="Piazza S."/>
            <person name="Reed J."/>
            <person name="Reid J.F."/>
            <person name="Ring B.Z."/>
            <person name="Ringwald M."/>
            <person name="Rost B."/>
            <person name="Ruan Y."/>
            <person name="Salzberg S.L."/>
            <person name="Sandelin A."/>
            <person name="Schneider C."/>
            <person name="Schoenbach C."/>
            <person name="Sekiguchi K."/>
            <person name="Semple C.A."/>
            <person name="Seno S."/>
            <person name="Sessa L."/>
            <person name="Sheng Y."/>
            <person name="Shibata Y."/>
            <person name="Shimada H."/>
            <person name="Shimada K."/>
            <person name="Silva D."/>
            <person name="Sinclair B."/>
            <person name="Sperling S."/>
            <person name="Stupka E."/>
            <person name="Sugiura K."/>
            <person name="Sultana R."/>
            <person name="Takenaka Y."/>
            <person name="Taki K."/>
            <person name="Tammoja K."/>
            <person name="Tan S.L."/>
            <person name="Tang S."/>
            <person name="Taylor M.S."/>
            <person name="Tegner J."/>
            <person name="Teichmann S.A."/>
            <person name="Ueda H.R."/>
            <person name="van Nimwegen E."/>
            <person name="Verardo R."/>
            <person name="Wei C.L."/>
            <person name="Yagi K."/>
            <person name="Yamanishi H."/>
            <person name="Zabarovsky E."/>
            <person name="Zhu S."/>
            <person name="Zimmer A."/>
            <person name="Hide W."/>
            <person name="Bult C."/>
            <person name="Grimmond S.M."/>
            <person name="Teasdale R.D."/>
            <person name="Liu E.T."/>
            <person name="Brusic V."/>
            <person name="Quackenbush J."/>
            <person name="Wahlestedt C."/>
            <person name="Mattick J.S."/>
            <person name="Hume D.A."/>
            <person name="Kai C."/>
            <person name="Sasaki D."/>
            <person name="Tomaru Y."/>
            <person name="Fukuda S."/>
            <person name="Kanamori-Katayama M."/>
            <person name="Suzuki M."/>
            <person name="Aoki J."/>
            <person name="Arakawa T."/>
            <person name="Iida J."/>
            <person name="Imamura K."/>
            <person name="Itoh M."/>
            <person name="Kato T."/>
            <person name="Kawaji H."/>
            <person name="Kawagashira N."/>
            <person name="Kawashima T."/>
            <person name="Kojima M."/>
            <person name="Kondo S."/>
            <person name="Konno H."/>
            <person name="Nakano K."/>
            <person name="Ninomiya N."/>
            <person name="Nishio T."/>
            <person name="Okada M."/>
            <person name="Plessy C."/>
            <person name="Shibata K."/>
            <person name="Shiraki T."/>
            <person name="Suzuki S."/>
            <person name="Tagami M."/>
            <person name="Waki K."/>
            <person name="Watahiki A."/>
            <person name="Okamura-Oho Y."/>
            <person name="Suzuki H."/>
            <person name="Kawai J."/>
            <person name="Hayashizaki Y."/>
        </authorList>
    </citation>
    <scope>NUCLEOTIDE SEQUENCE [LARGE SCALE MRNA] OF 30-128</scope>
    <source>
        <strain evidence="9">C57BL/6J</strain>
        <tissue evidence="9">Corpus striatum</tissue>
    </source>
</reference>
<reference evidence="8" key="3">
    <citation type="journal article" date="2007" name="FEBS Lett.">
        <title>Ripply2 is essential for precise somite formation during mouse early development.</title>
        <authorList>
            <person name="Chan T."/>
            <person name="Kondow A."/>
            <person name="Hosoya A."/>
            <person name="Hitachi K."/>
            <person name="Yukita A."/>
            <person name="Okabayashi K."/>
            <person name="Nakamura H."/>
            <person name="Ozawa H."/>
            <person name="Kiyonari H."/>
            <person name="Michiue T."/>
            <person name="Ito Y."/>
            <person name="Asashima M."/>
        </authorList>
    </citation>
    <scope>FUNCTION</scope>
    <scope>TISSUE SPECIFICITY</scope>
</reference>
<reference evidence="8" key="4">
    <citation type="journal article" date="2007" name="Development">
        <title>The negative regulation of Mesp2 by mouse Ripply2 is required to establish the rostro-caudal patterning within a somite.</title>
        <authorList>
            <person name="Morimoto M."/>
            <person name="Sasaki N."/>
            <person name="Oginuma M."/>
            <person name="Kiso M."/>
            <person name="Igarashi K."/>
            <person name="Aizaki K."/>
            <person name="Kanno J."/>
            <person name="Saga Y."/>
        </authorList>
    </citation>
    <scope>FUNCTION</scope>
    <scope>INDUCTION</scope>
</reference>
<comment type="function">
    <text evidence="6 7">Plays a role in somitogenesis. Required for somite segregation and establishment of rostrocaudal polarity in somites.</text>
</comment>
<comment type="subcellular location">
    <subcellularLocation>
        <location evidence="2">Nucleus</location>
    </subcellularLocation>
</comment>
<comment type="tissue specificity">
    <text evidence="5 7">Expressed in the embryonic anterior presomitic mesoderm. First expressed in S-I at 8.5 dpc, where expression is maintained until 13.5 dpc, with an additional stripe of expression sometimes seen in the rostral part of S0 and S-I.</text>
</comment>
<comment type="induction">
    <text evidence="6">By MESP2, and acts in a negative feedback loop with MESP2, functioning negatively toward MESP2 to regulate NOTCH signaling in the anterior presomitic mesoderm.</text>
</comment>
<comment type="domain">
    <text evidence="1">The ripply homology domain is required for transcriptional repression.</text>
</comment>
<comment type="domain">
    <text evidence="2">The WRPW motif is required for binding to tle/groucho proteins.</text>
</comment>
<comment type="similarity">
    <text evidence="8">Belongs to the ripply family.</text>
</comment>
<comment type="sequence caution" evidence="8">
    <conflict type="miscellaneous discrepancy">
        <sequence resource="EMBL-CDS" id="BAC38162"/>
    </conflict>
    <text>Intron retention.</text>
</comment>
<gene>
    <name evidence="11" type="primary">Ripply2</name>
</gene>
<protein>
    <recommendedName>
        <fullName>Protein ripply2</fullName>
    </recommendedName>
</protein>
<sequence length="128" mass="14305">MDTTESAESAHNPARPPSRSRCPPSAQPGSEGFWRPWVRTPGEKEKRTGPRAAEALPSGPGMAEASGKLLQYQHPVRLFWPKSKCYDYLYQEAETLLKNFPIQATISFYEDSDSEDEIEGLACENQSN</sequence>
<keyword id="KW-0217">Developmental protein</keyword>
<keyword id="KW-0539">Nucleus</keyword>
<keyword id="KW-1185">Reference proteome</keyword>
<organism>
    <name type="scientific">Mus musculus</name>
    <name type="common">Mouse</name>
    <dbReference type="NCBI Taxonomy" id="10090"/>
    <lineage>
        <taxon>Eukaryota</taxon>
        <taxon>Metazoa</taxon>
        <taxon>Chordata</taxon>
        <taxon>Craniata</taxon>
        <taxon>Vertebrata</taxon>
        <taxon>Euteleostomi</taxon>
        <taxon>Mammalia</taxon>
        <taxon>Eutheria</taxon>
        <taxon>Euarchontoglires</taxon>
        <taxon>Glires</taxon>
        <taxon>Rodentia</taxon>
        <taxon>Myomorpha</taxon>
        <taxon>Muroidea</taxon>
        <taxon>Muridae</taxon>
        <taxon>Murinae</taxon>
        <taxon>Mus</taxon>
        <taxon>Mus</taxon>
    </lineage>
</organism>
<name>RIPP2_MOUSE</name>
<feature type="chain" id="PRO_0000307760" description="Protein ripply2">
    <location>
        <begin position="1"/>
        <end position="128"/>
    </location>
</feature>
<feature type="region of interest" description="Disordered" evidence="4">
    <location>
        <begin position="1"/>
        <end position="64"/>
    </location>
</feature>
<feature type="region of interest" description="Ripply homology domain" evidence="3">
    <location>
        <begin position="74"/>
        <end position="109"/>
    </location>
</feature>
<feature type="short sequence motif" description="WRPW motif" evidence="3">
    <location>
        <begin position="34"/>
        <end position="37"/>
    </location>
</feature>
<feature type="compositionally biased region" description="Low complexity" evidence="4">
    <location>
        <begin position="17"/>
        <end position="28"/>
    </location>
</feature>
<dbReference type="EMBL" id="AB212223">
    <property type="protein sequence ID" value="BAE53720.1"/>
    <property type="molecule type" value="mRNA"/>
</dbReference>
<dbReference type="EMBL" id="AK081203">
    <property type="protein sequence ID" value="BAC38162.1"/>
    <property type="status" value="ALT_SEQ"/>
    <property type="molecule type" value="mRNA"/>
</dbReference>
<dbReference type="CCDS" id="CCDS40715.1"/>
<dbReference type="RefSeq" id="NP_001032996.1">
    <property type="nucleotide sequence ID" value="NM_001037907.2"/>
</dbReference>
<dbReference type="FunCoup" id="Q2WG76">
    <property type="interactions" value="720"/>
</dbReference>
<dbReference type="STRING" id="10090.ENSMUSP00000055369"/>
<dbReference type="PaxDb" id="10090-ENSMUSP00000055369"/>
<dbReference type="Antibodypedia" id="57637">
    <property type="antibodies" value="60 antibodies from 9 providers"/>
</dbReference>
<dbReference type="DNASU" id="382089"/>
<dbReference type="Ensembl" id="ENSMUST00000058846.11">
    <property type="protein sequence ID" value="ENSMUSP00000055369.5"/>
    <property type="gene ID" value="ENSMUSG00000047897.11"/>
</dbReference>
<dbReference type="GeneID" id="382089"/>
<dbReference type="KEGG" id="mmu:382089"/>
<dbReference type="UCSC" id="uc009qya.1">
    <property type="organism name" value="mouse"/>
</dbReference>
<dbReference type="AGR" id="MGI:2685968"/>
<dbReference type="CTD" id="134701"/>
<dbReference type="MGI" id="MGI:2685968">
    <property type="gene designation" value="Ripply2"/>
</dbReference>
<dbReference type="VEuPathDB" id="HostDB:ENSMUSG00000047897"/>
<dbReference type="eggNOG" id="ENOG502S6U6">
    <property type="taxonomic scope" value="Eukaryota"/>
</dbReference>
<dbReference type="GeneTree" id="ENSGT00940000161538"/>
<dbReference type="HOGENOM" id="CLU_117697_1_0_1"/>
<dbReference type="InParanoid" id="Q2WG76"/>
<dbReference type="OMA" id="AELTCEN"/>
<dbReference type="OrthoDB" id="5978888at2759"/>
<dbReference type="PhylomeDB" id="Q2WG76"/>
<dbReference type="TreeFam" id="TF336045"/>
<dbReference type="BioGRID-ORCS" id="382089">
    <property type="hits" value="2 hits in 76 CRISPR screens"/>
</dbReference>
<dbReference type="PRO" id="PR:Q2WG76"/>
<dbReference type="Proteomes" id="UP000000589">
    <property type="component" value="Chromosome 9"/>
</dbReference>
<dbReference type="RNAct" id="Q2WG76">
    <property type="molecule type" value="protein"/>
</dbReference>
<dbReference type="Bgee" id="ENSMUSG00000047897">
    <property type="expression patterns" value="Expressed in lumbar subsegment of spinal cord and 80 other cell types or tissues"/>
</dbReference>
<dbReference type="GO" id="GO:0005654">
    <property type="term" value="C:nucleoplasm"/>
    <property type="evidence" value="ECO:0000304"/>
    <property type="project" value="Reactome"/>
</dbReference>
<dbReference type="GO" id="GO:0005634">
    <property type="term" value="C:nucleus"/>
    <property type="evidence" value="ECO:0000250"/>
    <property type="project" value="UniProtKB"/>
</dbReference>
<dbReference type="GO" id="GO:0009798">
    <property type="term" value="P:axis specification"/>
    <property type="evidence" value="ECO:0000315"/>
    <property type="project" value="MGI"/>
</dbReference>
<dbReference type="GO" id="GO:0060349">
    <property type="term" value="P:bone morphogenesis"/>
    <property type="evidence" value="ECO:0000316"/>
    <property type="project" value="MGI"/>
</dbReference>
<dbReference type="GO" id="GO:0007368">
    <property type="term" value="P:determination of left/right symmetry"/>
    <property type="evidence" value="ECO:0000315"/>
    <property type="project" value="MGI"/>
</dbReference>
<dbReference type="GO" id="GO:0007219">
    <property type="term" value="P:Notch signaling pathway"/>
    <property type="evidence" value="ECO:0000316"/>
    <property type="project" value="MGI"/>
</dbReference>
<dbReference type="GO" id="GO:0001503">
    <property type="term" value="P:ossification"/>
    <property type="evidence" value="ECO:0000315"/>
    <property type="project" value="MGI"/>
</dbReference>
<dbReference type="GO" id="GO:0036342">
    <property type="term" value="P:post-anal tail morphogenesis"/>
    <property type="evidence" value="ECO:0000315"/>
    <property type="project" value="MGI"/>
</dbReference>
<dbReference type="GO" id="GO:0010468">
    <property type="term" value="P:regulation of gene expression"/>
    <property type="evidence" value="ECO:0000316"/>
    <property type="project" value="MGI"/>
</dbReference>
<dbReference type="GO" id="GO:0032525">
    <property type="term" value="P:somite rostral/caudal axis specification"/>
    <property type="evidence" value="ECO:0000314"/>
    <property type="project" value="UniProtKB"/>
</dbReference>
<dbReference type="GO" id="GO:0001756">
    <property type="term" value="P:somitogenesis"/>
    <property type="evidence" value="ECO:0000314"/>
    <property type="project" value="UniProtKB"/>
</dbReference>
<dbReference type="InterPro" id="IPR028127">
    <property type="entry name" value="Ripply_fam"/>
</dbReference>
<dbReference type="PANTHER" id="PTHR16770">
    <property type="entry name" value="PROTEIN RIPPLY-LIKE"/>
    <property type="match status" value="1"/>
</dbReference>
<dbReference type="PANTHER" id="PTHR16770:SF3">
    <property type="entry name" value="PROTEIN RIPPLY2"/>
    <property type="match status" value="1"/>
</dbReference>
<dbReference type="Pfam" id="PF14998">
    <property type="entry name" value="Ripply"/>
    <property type="match status" value="1"/>
</dbReference>